<keyword id="KW-0256">Endoplasmic reticulum</keyword>
<keyword id="KW-0472">Membrane</keyword>
<keyword id="KW-1185">Reference proteome</keyword>
<keyword id="KW-0812">Transmembrane</keyword>
<keyword id="KW-1133">Transmembrane helix</keyword>
<keyword id="KW-0834">Unfolded protein response</keyword>
<sequence>MVAKQRIRMANEKHSKNITQRGNVAKTLRPQEEKYPVGPWLLALFVFVVCGSAIFQIIQSIRMGM</sequence>
<protein>
    <recommendedName>
        <fullName>Stress-associated endoplasmic reticulum protein 2</fullName>
    </recommendedName>
    <alternativeName>
        <fullName>Ribosome-associated membrane protein RAMP4-2</fullName>
    </alternativeName>
</protein>
<evidence type="ECO:0000250" key="1">
    <source>
        <dbReference type="UniProtKB" id="Q9R2C1"/>
    </source>
</evidence>
<evidence type="ECO:0000255" key="2"/>
<evidence type="ECO:0000305" key="3"/>
<name>SERP2_HUMAN</name>
<dbReference type="EMBL" id="BC029067">
    <property type="protein sequence ID" value="AAH29067.1"/>
    <property type="molecule type" value="mRNA"/>
</dbReference>
<dbReference type="EMBL" id="AL138960">
    <property type="status" value="NOT_ANNOTATED_CDS"/>
    <property type="molecule type" value="Genomic_DNA"/>
</dbReference>
<dbReference type="CCDS" id="CCDS31965.1"/>
<dbReference type="RefSeq" id="NP_001010897.1">
    <property type="nucleotide sequence ID" value="NM_001010897.3"/>
</dbReference>
<dbReference type="RefSeq" id="NP_001333909.1">
    <property type="nucleotide sequence ID" value="NM_001346980.2"/>
</dbReference>
<dbReference type="SMR" id="Q8N6R1"/>
<dbReference type="BioGRID" id="132508">
    <property type="interactions" value="62"/>
</dbReference>
<dbReference type="FunCoup" id="Q8N6R1">
    <property type="interactions" value="204"/>
</dbReference>
<dbReference type="IntAct" id="Q8N6R1">
    <property type="interactions" value="55"/>
</dbReference>
<dbReference type="STRING" id="9606.ENSP00000368477"/>
<dbReference type="iPTMnet" id="Q8N6R1"/>
<dbReference type="PhosphoSitePlus" id="Q8N6R1"/>
<dbReference type="BioMuta" id="SERP2"/>
<dbReference type="DMDM" id="74751068"/>
<dbReference type="jPOST" id="Q8N6R1"/>
<dbReference type="MassIVE" id="Q8N6R1"/>
<dbReference type="PaxDb" id="9606-ENSP00000368477"/>
<dbReference type="PeptideAtlas" id="Q8N6R1"/>
<dbReference type="ProteomicsDB" id="72221"/>
<dbReference type="TopDownProteomics" id="Q8N6R1"/>
<dbReference type="Antibodypedia" id="77372">
    <property type="antibodies" value="2 antibodies from 2 providers"/>
</dbReference>
<dbReference type="DNASU" id="387923"/>
<dbReference type="Ensembl" id="ENST00000379179.8">
    <property type="protein sequence ID" value="ENSP00000368477.3"/>
    <property type="gene ID" value="ENSG00000151778.11"/>
</dbReference>
<dbReference type="GeneID" id="387923"/>
<dbReference type="KEGG" id="hsa:387923"/>
<dbReference type="MANE-Select" id="ENST00000379179.8">
    <property type="protein sequence ID" value="ENSP00000368477.3"/>
    <property type="RefSeq nucleotide sequence ID" value="NM_001010897.3"/>
    <property type="RefSeq protein sequence ID" value="NP_001010897.1"/>
</dbReference>
<dbReference type="UCSC" id="uc001uzj.3">
    <property type="organism name" value="human"/>
</dbReference>
<dbReference type="AGR" id="HGNC:20607"/>
<dbReference type="CTD" id="387923"/>
<dbReference type="DisGeNET" id="387923"/>
<dbReference type="GeneCards" id="SERP2"/>
<dbReference type="HGNC" id="HGNC:20607">
    <property type="gene designation" value="SERP2"/>
</dbReference>
<dbReference type="HPA" id="ENSG00000151778">
    <property type="expression patterns" value="Tissue enhanced (brain, testis)"/>
</dbReference>
<dbReference type="MalaCards" id="SERP2"/>
<dbReference type="neXtProt" id="NX_Q8N6R1"/>
<dbReference type="OpenTargets" id="ENSG00000151778"/>
<dbReference type="PharmGKB" id="PA162402953"/>
<dbReference type="VEuPathDB" id="HostDB:ENSG00000151778"/>
<dbReference type="eggNOG" id="KOG3491">
    <property type="taxonomic scope" value="Eukaryota"/>
</dbReference>
<dbReference type="GeneTree" id="ENSGT00940000162467"/>
<dbReference type="HOGENOM" id="CLU_160944_3_0_1"/>
<dbReference type="InParanoid" id="Q8N6R1"/>
<dbReference type="OMA" id="KYATTPW"/>
<dbReference type="OrthoDB" id="16679at2759"/>
<dbReference type="PAN-GO" id="Q8N6R1">
    <property type="GO annotations" value="2 GO annotations based on evolutionary models"/>
</dbReference>
<dbReference type="PhylomeDB" id="Q8N6R1"/>
<dbReference type="TreeFam" id="TF313229"/>
<dbReference type="PathwayCommons" id="Q8N6R1"/>
<dbReference type="SignaLink" id="Q8N6R1"/>
<dbReference type="BioGRID-ORCS" id="387923">
    <property type="hits" value="18 hits in 1144 CRISPR screens"/>
</dbReference>
<dbReference type="ChiTaRS" id="SERP2">
    <property type="organism name" value="human"/>
</dbReference>
<dbReference type="GenomeRNAi" id="387923"/>
<dbReference type="Pharos" id="Q8N6R1">
    <property type="development level" value="Tdark"/>
</dbReference>
<dbReference type="PRO" id="PR:Q8N6R1"/>
<dbReference type="Proteomes" id="UP000005640">
    <property type="component" value="Chromosome 13"/>
</dbReference>
<dbReference type="RNAct" id="Q8N6R1">
    <property type="molecule type" value="protein"/>
</dbReference>
<dbReference type="Bgee" id="ENSG00000151778">
    <property type="expression patterns" value="Expressed in Brodmann (1909) area 9 and 130 other cell types or tissues"/>
</dbReference>
<dbReference type="ExpressionAtlas" id="Q8N6R1">
    <property type="expression patterns" value="baseline and differential"/>
</dbReference>
<dbReference type="GO" id="GO:0005783">
    <property type="term" value="C:endoplasmic reticulum"/>
    <property type="evidence" value="ECO:0000318"/>
    <property type="project" value="GO_Central"/>
</dbReference>
<dbReference type="GO" id="GO:0005789">
    <property type="term" value="C:endoplasmic reticulum membrane"/>
    <property type="evidence" value="ECO:0007669"/>
    <property type="project" value="UniProtKB-SubCell"/>
</dbReference>
<dbReference type="GO" id="GO:0030968">
    <property type="term" value="P:endoplasmic reticulum unfolded protein response"/>
    <property type="evidence" value="ECO:0000318"/>
    <property type="project" value="GO_Central"/>
</dbReference>
<dbReference type="InterPro" id="IPR010580">
    <property type="entry name" value="ER_stress-assoc"/>
</dbReference>
<dbReference type="PANTHER" id="PTHR15601">
    <property type="entry name" value="STRESS ASSOCIATED ENDOPLASMIC RETICULUM PROTEIN SERP1/RAMP4"/>
    <property type="match status" value="1"/>
</dbReference>
<dbReference type="PANTHER" id="PTHR15601:SF20">
    <property type="entry name" value="STRESS-ASSOCIATED ENDOPLASMIC RETICULUM PROTEIN 2"/>
    <property type="match status" value="1"/>
</dbReference>
<dbReference type="Pfam" id="PF06624">
    <property type="entry name" value="RAMP4"/>
    <property type="match status" value="1"/>
</dbReference>
<proteinExistence type="evidence at protein level"/>
<gene>
    <name type="primary">SERP2</name>
    <name type="synonym">C13orf21</name>
</gene>
<reference key="1">
    <citation type="journal article" date="2004" name="Nature">
        <title>The DNA sequence and analysis of human chromosome 13.</title>
        <authorList>
            <person name="Dunham A."/>
            <person name="Matthews L.H."/>
            <person name="Burton J."/>
            <person name="Ashurst J.L."/>
            <person name="Howe K.L."/>
            <person name="Ashcroft K.J."/>
            <person name="Beare D.M."/>
            <person name="Burford D.C."/>
            <person name="Hunt S.E."/>
            <person name="Griffiths-Jones S."/>
            <person name="Jones M.C."/>
            <person name="Keenan S.J."/>
            <person name="Oliver K."/>
            <person name="Scott C.E."/>
            <person name="Ainscough R."/>
            <person name="Almeida J.P."/>
            <person name="Ambrose K.D."/>
            <person name="Andrews D.T."/>
            <person name="Ashwell R.I.S."/>
            <person name="Babbage A.K."/>
            <person name="Bagguley C.L."/>
            <person name="Bailey J."/>
            <person name="Bannerjee R."/>
            <person name="Barlow K.F."/>
            <person name="Bates K."/>
            <person name="Beasley H."/>
            <person name="Bird C.P."/>
            <person name="Bray-Allen S."/>
            <person name="Brown A.J."/>
            <person name="Brown J.Y."/>
            <person name="Burrill W."/>
            <person name="Carder C."/>
            <person name="Carter N.P."/>
            <person name="Chapman J.C."/>
            <person name="Clamp M.E."/>
            <person name="Clark S.Y."/>
            <person name="Clarke G."/>
            <person name="Clee C.M."/>
            <person name="Clegg S.C."/>
            <person name="Cobley V."/>
            <person name="Collins J.E."/>
            <person name="Corby N."/>
            <person name="Coville G.J."/>
            <person name="Deloukas P."/>
            <person name="Dhami P."/>
            <person name="Dunham I."/>
            <person name="Dunn M."/>
            <person name="Earthrowl M.E."/>
            <person name="Ellington A.G."/>
            <person name="Faulkner L."/>
            <person name="Frankish A.G."/>
            <person name="Frankland J."/>
            <person name="French L."/>
            <person name="Garner P."/>
            <person name="Garnett J."/>
            <person name="Gilbert J.G.R."/>
            <person name="Gilson C.J."/>
            <person name="Ghori J."/>
            <person name="Grafham D.V."/>
            <person name="Gribble S.M."/>
            <person name="Griffiths C."/>
            <person name="Hall R.E."/>
            <person name="Hammond S."/>
            <person name="Harley J.L."/>
            <person name="Hart E.A."/>
            <person name="Heath P.D."/>
            <person name="Howden P.J."/>
            <person name="Huckle E.J."/>
            <person name="Hunt P.J."/>
            <person name="Hunt A.R."/>
            <person name="Johnson C."/>
            <person name="Johnson D."/>
            <person name="Kay M."/>
            <person name="Kimberley A.M."/>
            <person name="King A."/>
            <person name="Laird G.K."/>
            <person name="Langford C.J."/>
            <person name="Lawlor S."/>
            <person name="Leongamornlert D.A."/>
            <person name="Lloyd D.M."/>
            <person name="Lloyd C."/>
            <person name="Loveland J.E."/>
            <person name="Lovell J."/>
            <person name="Martin S."/>
            <person name="Mashreghi-Mohammadi M."/>
            <person name="McLaren S.J."/>
            <person name="McMurray A."/>
            <person name="Milne S."/>
            <person name="Moore M.J.F."/>
            <person name="Nickerson T."/>
            <person name="Palmer S.A."/>
            <person name="Pearce A.V."/>
            <person name="Peck A.I."/>
            <person name="Pelan S."/>
            <person name="Phillimore B."/>
            <person name="Porter K.M."/>
            <person name="Rice C.M."/>
            <person name="Searle S."/>
            <person name="Sehra H.K."/>
            <person name="Shownkeen R."/>
            <person name="Skuce C.D."/>
            <person name="Smith M."/>
            <person name="Steward C.A."/>
            <person name="Sycamore N."/>
            <person name="Tester J."/>
            <person name="Thomas D.W."/>
            <person name="Tracey A."/>
            <person name="Tromans A."/>
            <person name="Tubby B."/>
            <person name="Wall M."/>
            <person name="Wallis J.M."/>
            <person name="West A.P."/>
            <person name="Whitehead S.L."/>
            <person name="Willey D.L."/>
            <person name="Wilming L."/>
            <person name="Wray P.W."/>
            <person name="Wright M.W."/>
            <person name="Young L."/>
            <person name="Coulson A."/>
            <person name="Durbin R.M."/>
            <person name="Hubbard T."/>
            <person name="Sulston J.E."/>
            <person name="Beck S."/>
            <person name="Bentley D.R."/>
            <person name="Rogers J."/>
            <person name="Ross M.T."/>
        </authorList>
    </citation>
    <scope>NUCLEOTIDE SEQUENCE [LARGE SCALE GENOMIC DNA]</scope>
</reference>
<reference key="2">
    <citation type="journal article" date="2004" name="Genome Res.">
        <title>The status, quality, and expansion of the NIH full-length cDNA project: the Mammalian Gene Collection (MGC).</title>
        <authorList>
            <consortium name="The MGC Project Team"/>
        </authorList>
    </citation>
    <scope>NUCLEOTIDE SEQUENCE [LARGE SCALE MRNA]</scope>
    <source>
        <tissue>Brain</tissue>
    </source>
</reference>
<organism>
    <name type="scientific">Homo sapiens</name>
    <name type="common">Human</name>
    <dbReference type="NCBI Taxonomy" id="9606"/>
    <lineage>
        <taxon>Eukaryota</taxon>
        <taxon>Metazoa</taxon>
        <taxon>Chordata</taxon>
        <taxon>Craniata</taxon>
        <taxon>Vertebrata</taxon>
        <taxon>Euteleostomi</taxon>
        <taxon>Mammalia</taxon>
        <taxon>Eutheria</taxon>
        <taxon>Euarchontoglires</taxon>
        <taxon>Primates</taxon>
        <taxon>Haplorrhini</taxon>
        <taxon>Catarrhini</taxon>
        <taxon>Hominidae</taxon>
        <taxon>Homo</taxon>
    </lineage>
</organism>
<comment type="function">
    <text evidence="1">Interacts with target proteins during their translocation into the lumen of the endoplasmic reticulum. Protects unfolded target proteins against degradation during ER stress. May facilitate glycosylation of target proteins after termination of ER stress. May modulate the use of N-glycosylation sites on target proteins.</text>
</comment>
<comment type="subunit">
    <text evidence="1">Interacts with SEC61B, SEC61A1 and the SEC61 complex. Interacts with CANX.</text>
</comment>
<comment type="interaction">
    <interactant intactId="EBI-749270">
        <id>Q8N6R1</id>
    </interactant>
    <interactant intactId="EBI-13064220">
        <id>Q5BKT4</id>
        <label>ALG10</label>
    </interactant>
    <organismsDiffer>false</organismsDiffer>
    <experiments>3</experiments>
</comment>
<comment type="interaction">
    <interactant intactId="EBI-749270">
        <id>Q8N6R1</id>
    </interactant>
    <interactant intactId="EBI-13059134">
        <id>Q13520</id>
        <label>AQP6</label>
    </interactant>
    <organismsDiffer>false</organismsDiffer>
    <experiments>3</experiments>
</comment>
<comment type="interaction">
    <interactant intactId="EBI-749270">
        <id>Q8N6R1</id>
    </interactant>
    <interactant intactId="EBI-700794">
        <id>Q13323</id>
        <label>BIK</label>
    </interactant>
    <organismsDiffer>false</organismsDiffer>
    <experiments>3</experiments>
</comment>
<comment type="interaction">
    <interactant intactId="EBI-749270">
        <id>Q8N6R1</id>
    </interactant>
    <interactant intactId="EBI-11532900">
        <id>J3KQ12</id>
        <label>BSCL2</label>
    </interactant>
    <organismsDiffer>false</organismsDiffer>
    <experiments>3</experiments>
</comment>
<comment type="interaction">
    <interactant intactId="EBI-749270">
        <id>Q8N6R1</id>
    </interactant>
    <interactant intactId="EBI-2622997">
        <id>Q9HA82</id>
        <label>CERS4</label>
    </interactant>
    <organismsDiffer>false</organismsDiffer>
    <experiments>3</experiments>
</comment>
<comment type="interaction">
    <interactant intactId="EBI-749270">
        <id>Q8N6R1</id>
    </interactant>
    <interactant intactId="EBI-1045797">
        <id>Q8N5K1</id>
        <label>CISD2</label>
    </interactant>
    <organismsDiffer>false</organismsDiffer>
    <experiments>3</experiments>
</comment>
<comment type="interaction">
    <interactant intactId="EBI-749270">
        <id>Q8N6R1</id>
    </interactant>
    <interactant intactId="EBI-8646596">
        <id>P49447</id>
        <label>CYB561</label>
    </interactant>
    <organismsDiffer>false</organismsDiffer>
    <experiments>3</experiments>
</comment>
<comment type="interaction">
    <interactant intactId="EBI-749270">
        <id>Q8N6R1</id>
    </interactant>
    <interactant intactId="EBI-8637742">
        <id>Q53TN4</id>
        <label>CYBRD1</label>
    </interactant>
    <organismsDiffer>false</organismsDiffer>
    <experiments>3</experiments>
</comment>
<comment type="interaction">
    <interactant intactId="EBI-749270">
        <id>Q8N6R1</id>
    </interactant>
    <interactant intactId="EBI-3915253">
        <id>Q15125</id>
        <label>EBP</label>
    </interactant>
    <organismsDiffer>false</organismsDiffer>
    <experiments>3</experiments>
</comment>
<comment type="interaction">
    <interactant intactId="EBI-749270">
        <id>Q8N6R1</id>
    </interactant>
    <interactant intactId="EBI-18535450">
        <id>Q9GZR5</id>
        <label>ELOVL4</label>
    </interactant>
    <organismsDiffer>false</organismsDiffer>
    <experiments>3</experiments>
</comment>
<comment type="interaction">
    <interactant intactId="EBI-749270">
        <id>Q8N6R1</id>
    </interactant>
    <interactant intactId="EBI-781551">
        <id>Q9Y282</id>
        <label>ERGIC3</label>
    </interactant>
    <organismsDiffer>false</organismsDiffer>
    <experiments>3</experiments>
</comment>
<comment type="interaction">
    <interactant intactId="EBI-749270">
        <id>Q8N6R1</id>
    </interactant>
    <interactant intactId="EBI-18938272">
        <id>Q96KR6</id>
        <label>FAM210B</label>
    </interactant>
    <organismsDiffer>false</organismsDiffer>
    <experiments>3</experiments>
</comment>
<comment type="interaction">
    <interactant intactId="EBI-749270">
        <id>Q8N6R1</id>
    </interactant>
    <interactant intactId="EBI-17187481">
        <id>P12318-2</id>
        <label>FCGR2A</label>
    </interactant>
    <organismsDiffer>false</organismsDiffer>
    <experiments>3</experiments>
</comment>
<comment type="interaction">
    <interactant intactId="EBI-749270">
        <id>Q8N6R1</id>
    </interactant>
    <interactant intactId="EBI-12142257">
        <id>Q8TBE3</id>
        <label>FNDC9</label>
    </interactant>
    <organismsDiffer>false</organismsDiffer>
    <experiments>3</experiments>
</comment>
<comment type="interaction">
    <interactant intactId="EBI-749270">
        <id>Q8N6R1</id>
    </interactant>
    <interactant intactId="EBI-6911547">
        <id>A2A2Y4</id>
        <label>FRMD3</label>
    </interactant>
    <organismsDiffer>false</organismsDiffer>
    <experiments>3</experiments>
</comment>
<comment type="interaction">
    <interactant intactId="EBI-749270">
        <id>Q8N6R1</id>
    </interactant>
    <interactant intactId="EBI-18908258">
        <id>O00258</id>
        <label>GET1</label>
    </interactant>
    <organismsDiffer>false</organismsDiffer>
    <experiments>3</experiments>
</comment>
<comment type="interaction">
    <interactant intactId="EBI-749270">
        <id>Q8N6R1</id>
    </interactant>
    <interactant intactId="EBI-3933251">
        <id>Q9NS71</id>
        <label>GKN1</label>
    </interactant>
    <organismsDiffer>false</organismsDiffer>
    <experiments>3</experiments>
</comment>
<comment type="interaction">
    <interactant intactId="EBI-749270">
        <id>Q8N6R1</id>
    </interactant>
    <interactant intactId="EBI-13345167">
        <id>Q8TDT2</id>
        <label>GPR152</label>
    </interactant>
    <organismsDiffer>false</organismsDiffer>
    <experiments>3</experiments>
</comment>
<comment type="interaction">
    <interactant intactId="EBI-749270">
        <id>Q8N6R1</id>
    </interactant>
    <interactant intactId="EBI-18076404">
        <id>O15529</id>
        <label>GPR42</label>
    </interactant>
    <organismsDiffer>false</organismsDiffer>
    <experiments>3</experiments>
</comment>
<comment type="interaction">
    <interactant intactId="EBI-749270">
        <id>Q8N6R1</id>
    </interactant>
    <interactant intactId="EBI-749265">
        <id>Q8N6L0</id>
        <label>KASH5</label>
    </interactant>
    <organismsDiffer>false</organismsDiffer>
    <experiments>6</experiments>
</comment>
<comment type="interaction">
    <interactant intactId="EBI-749270">
        <id>Q8N6R1</id>
    </interactant>
    <interactant intactId="EBI-2820517">
        <id>Q8TAF8</id>
        <label>LHFPL5</label>
    </interactant>
    <organismsDiffer>false</organismsDiffer>
    <experiments>3</experiments>
</comment>
<comment type="interaction">
    <interactant intactId="EBI-749270">
        <id>Q8N6R1</id>
    </interactant>
    <interactant intactId="EBI-10329546">
        <id>Q9Y5Y7</id>
        <label>LYVE1</label>
    </interactant>
    <organismsDiffer>false</organismsDiffer>
    <experiments>3</experiments>
</comment>
<comment type="interaction">
    <interactant intactId="EBI-749270">
        <id>Q8N6R1</id>
    </interactant>
    <interactant intactId="EBI-373355">
        <id>Q5SR56</id>
        <label>MFSD14B</label>
    </interactant>
    <organismsDiffer>false</organismsDiffer>
    <experiments>3</experiments>
</comment>
<comment type="interaction">
    <interactant intactId="EBI-749270">
        <id>Q8N6R1</id>
    </interactant>
    <interactant intactId="EBI-3923617">
        <id>Q9H2K0</id>
        <label>MTIF3</label>
    </interactant>
    <organismsDiffer>false</organismsDiffer>
    <experiments>3</experiments>
</comment>
<comment type="interaction">
    <interactant intactId="EBI-749270">
        <id>Q8N6R1</id>
    </interactant>
    <interactant intactId="EBI-17263240">
        <id>P15941-11</id>
        <label>MUC1</label>
    </interactant>
    <organismsDiffer>false</organismsDiffer>
    <experiments>3</experiments>
</comment>
<comment type="interaction">
    <interactant intactId="EBI-749270">
        <id>Q8N6R1</id>
    </interactant>
    <interactant intactId="EBI-10969203">
        <id>O14524-2</id>
        <label>NEMP1</label>
    </interactant>
    <organismsDiffer>false</organismsDiffer>
    <experiments>3</experiments>
</comment>
<comment type="interaction">
    <interactant intactId="EBI-749270">
        <id>Q8N6R1</id>
    </interactant>
    <interactant intactId="EBI-12807478">
        <id>P35372-10</id>
        <label>OPRM1</label>
    </interactant>
    <organismsDiffer>false</organismsDiffer>
    <experiments>3</experiments>
</comment>
<comment type="interaction">
    <interactant intactId="EBI-749270">
        <id>Q8N6R1</id>
    </interactant>
    <interactant intactId="EBI-11161398">
        <id>O14684</id>
        <label>PTGES</label>
    </interactant>
    <organismsDiffer>false</organismsDiffer>
    <experiments>3</experiments>
</comment>
<comment type="interaction">
    <interactant intactId="EBI-749270">
        <id>Q8N6R1</id>
    </interactant>
    <interactant intactId="EBI-10192441">
        <id>Q86VR2</id>
        <label>RETREG3</label>
    </interactant>
    <organismsDiffer>false</organismsDiffer>
    <experiments>3</experiments>
</comment>
<comment type="interaction">
    <interactant intactId="EBI-749270">
        <id>Q8N6R1</id>
    </interactant>
    <interactant intactId="EBI-18397230">
        <id>Q6P5S7</id>
        <label>RNASEK</label>
    </interactant>
    <organismsDiffer>false</organismsDiffer>
    <experiments>3</experiments>
</comment>
<comment type="interaction">
    <interactant intactId="EBI-749270">
        <id>Q8N6R1</id>
    </interactant>
    <interactant intactId="EBI-17247926">
        <id>Q9NY72</id>
        <label>SCN3B</label>
    </interactant>
    <organismsDiffer>false</organismsDiffer>
    <experiments>3</experiments>
</comment>
<comment type="interaction">
    <interactant intactId="EBI-749270">
        <id>Q8N6R1</id>
    </interactant>
    <interactant intactId="EBI-18159983">
        <id>Q3KNW5</id>
        <label>SLC10A6</label>
    </interactant>
    <organismsDiffer>false</organismsDiffer>
    <experiments>3</experiments>
</comment>
<comment type="interaction">
    <interactant intactId="EBI-749270">
        <id>Q8N6R1</id>
    </interactant>
    <interactant intactId="EBI-13918058">
        <id>O14863</id>
        <label>SLC30A4</label>
    </interactant>
    <organismsDiffer>false</organismsDiffer>
    <experiments>3</experiments>
</comment>
<comment type="interaction">
    <interactant intactId="EBI-749270">
        <id>Q8N6R1</id>
    </interactant>
    <interactant intactId="EBI-9978441">
        <id>Q9H2H9</id>
        <label>SLC38A1</label>
    </interactant>
    <organismsDiffer>false</organismsDiffer>
    <experiments>3</experiments>
</comment>
<comment type="interaction">
    <interactant intactId="EBI-749270">
        <id>Q8N6R1</id>
    </interactant>
    <interactant intactId="EBI-10314552">
        <id>Q9NVC3</id>
        <label>SLC38A7</label>
    </interactant>
    <organismsDiffer>false</organismsDiffer>
    <experiments>3</experiments>
</comment>
<comment type="interaction">
    <interactant intactId="EBI-749270">
        <id>Q8N6R1</id>
    </interactant>
    <interactant intactId="EBI-17498703">
        <id>Q9HBV2</id>
        <label>SPACA1</label>
    </interactant>
    <organismsDiffer>false</organismsDiffer>
    <experiments>3</experiments>
</comment>
<comment type="interaction">
    <interactant intactId="EBI-749270">
        <id>Q8N6R1</id>
    </interactant>
    <interactant intactId="EBI-1211440">
        <id>P27105</id>
        <label>STOM</label>
    </interactant>
    <organismsDiffer>false</organismsDiffer>
    <experiments>3</experiments>
</comment>
<comment type="interaction">
    <interactant intactId="EBI-749270">
        <id>Q8N6R1</id>
    </interactant>
    <interactant intactId="EBI-712466">
        <id>Q16623</id>
        <label>STX1A</label>
    </interactant>
    <organismsDiffer>false</organismsDiffer>
    <experiments>3</experiments>
</comment>
<comment type="interaction">
    <interactant intactId="EBI-749270">
        <id>Q8N6R1</id>
    </interactant>
    <interactant intactId="EBI-6268651">
        <id>Q9NPL8</id>
        <label>TIMMDC1</label>
    </interactant>
    <organismsDiffer>false</organismsDiffer>
    <experiments>3</experiments>
</comment>
<comment type="interaction">
    <interactant intactId="EBI-749270">
        <id>Q8N6R1</id>
    </interactant>
    <interactant intactId="EBI-13351685">
        <id>Q96CE8</id>
        <label>TM4SF18</label>
    </interactant>
    <organismsDiffer>false</organismsDiffer>
    <experiments>3</experiments>
</comment>
<comment type="interaction">
    <interactant intactId="EBI-749270">
        <id>Q8N6R1</id>
    </interactant>
    <interactant intactId="EBI-6448756">
        <id>Q96DZ7</id>
        <label>TM4SF19</label>
    </interactant>
    <organismsDiffer>false</organismsDiffer>
    <experiments>3</experiments>
</comment>
<comment type="interaction">
    <interactant intactId="EBI-749270">
        <id>Q8N6R1</id>
    </interactant>
    <interactant intactId="EBI-11603430">
        <id>Q6PL24</id>
        <label>TMED8</label>
    </interactant>
    <organismsDiffer>false</organismsDiffer>
    <experiments>3</experiments>
</comment>
<comment type="interaction">
    <interactant intactId="EBI-749270">
        <id>Q8N6R1</id>
    </interactant>
    <interactant intactId="EBI-2821497">
        <id>Q9BVX2</id>
        <label>TMEM106C</label>
    </interactant>
    <organismsDiffer>false</organismsDiffer>
    <experiments>3</experiments>
</comment>
<comment type="interaction">
    <interactant intactId="EBI-749270">
        <id>Q8N6R1</id>
    </interactant>
    <interactant intactId="EBI-8638294">
        <id>Q9NUH8</id>
        <label>TMEM14B</label>
    </interactant>
    <organismsDiffer>false</organismsDiffer>
    <experiments>3</experiments>
</comment>
<comment type="interaction">
    <interactant intactId="EBI-749270">
        <id>Q8N6R1</id>
    </interactant>
    <interactant intactId="EBI-11724423">
        <id>Q7Z7N9</id>
        <label>TMEM179B</label>
    </interactant>
    <organismsDiffer>false</organismsDiffer>
    <experiments>3</experiments>
</comment>
<comment type="interaction">
    <interactant intactId="EBI-749270">
        <id>Q8N6R1</id>
    </interactant>
    <interactant intactId="EBI-10982110">
        <id>Q96Q45-2</id>
        <label>TMEM237</label>
    </interactant>
    <organismsDiffer>false</organismsDiffer>
    <experiments>3</experiments>
</comment>
<comment type="interaction">
    <interactant intactId="EBI-749270">
        <id>Q8N6R1</id>
    </interactant>
    <interactant intactId="EBI-11742770">
        <id>Q96HE8</id>
        <label>TMEM80</label>
    </interactant>
    <organismsDiffer>false</organismsDiffer>
    <experiments>3</experiments>
</comment>
<comment type="interaction">
    <interactant intactId="EBI-749270">
        <id>Q8N6R1</id>
    </interactant>
    <interactant intactId="EBI-6447886">
        <id>Q9Y320</id>
        <label>TMX2</label>
    </interactant>
    <organismsDiffer>false</organismsDiffer>
    <experiments>3</experiments>
</comment>
<comment type="subcellular location">
    <subcellularLocation>
        <location evidence="1">Membrane</location>
        <topology evidence="1">Single-pass membrane protein</topology>
    </subcellularLocation>
    <subcellularLocation>
        <location evidence="1">Endoplasmic reticulum membrane</location>
        <topology evidence="1">Single-pass membrane protein</topology>
    </subcellularLocation>
</comment>
<comment type="similarity">
    <text evidence="3">Belongs to the RAMP4 family.</text>
</comment>
<feature type="chain" id="PRO_0000274799" description="Stress-associated endoplasmic reticulum protein 2">
    <location>
        <begin position="1"/>
        <end position="65"/>
    </location>
</feature>
<feature type="transmembrane region" description="Helical" evidence="2">
    <location>
        <begin position="38"/>
        <end position="58"/>
    </location>
</feature>
<accession>Q8N6R1</accession>